<gene>
    <name type="primary">btuC</name>
    <name type="ordered locus">b1711</name>
    <name type="ordered locus">JW1701</name>
</gene>
<reference key="1">
    <citation type="journal article" date="1986" name="J. Bacteriol.">
        <title>Nucleotide sequence of the btuCED genes involved in vitamin B12 transport in Escherichia coli and homology with components of periplasmic-binding-protein-dependent transport systems.</title>
        <authorList>
            <person name="Friedrich M.J."/>
            <person name="Deveaux L.C."/>
            <person name="Kadner R.J."/>
        </authorList>
    </citation>
    <scope>NUCLEOTIDE SEQUENCE [GENOMIC DNA]</scope>
</reference>
<reference key="2">
    <citation type="journal article" date="1989" name="Mol. Gen. Genet.">
        <title>Vitamin B12 transport in Escherichia coli K12 does not require the btuE gene of the btuCED operon.</title>
        <authorList>
            <person name="Rioux C.R."/>
            <person name="Kadner R.J."/>
        </authorList>
    </citation>
    <scope>SEQUENCE REVISION</scope>
</reference>
<reference key="3">
    <citation type="journal article" date="1996" name="DNA Res.">
        <title>A 570-kb DNA sequence of the Escherichia coli K-12 genome corresponding to the 28.0-40.1 min region on the linkage map.</title>
        <authorList>
            <person name="Aiba H."/>
            <person name="Baba T."/>
            <person name="Fujita K."/>
            <person name="Hayashi K."/>
            <person name="Inada T."/>
            <person name="Isono K."/>
            <person name="Itoh T."/>
            <person name="Kasai H."/>
            <person name="Kashimoto K."/>
            <person name="Kimura S."/>
            <person name="Kitakawa M."/>
            <person name="Kitagawa M."/>
            <person name="Makino K."/>
            <person name="Miki T."/>
            <person name="Mizobuchi K."/>
            <person name="Mori H."/>
            <person name="Mori T."/>
            <person name="Motomura K."/>
            <person name="Nakade S."/>
            <person name="Nakamura Y."/>
            <person name="Nashimoto H."/>
            <person name="Nishio Y."/>
            <person name="Oshima T."/>
            <person name="Saito N."/>
            <person name="Sampei G."/>
            <person name="Seki Y."/>
            <person name="Sivasundaram S."/>
            <person name="Tagami H."/>
            <person name="Takeda J."/>
            <person name="Takemoto K."/>
            <person name="Takeuchi Y."/>
            <person name="Wada C."/>
            <person name="Yamamoto Y."/>
            <person name="Horiuchi T."/>
        </authorList>
    </citation>
    <scope>NUCLEOTIDE SEQUENCE [LARGE SCALE GENOMIC DNA]</scope>
    <source>
        <strain>K12 / W3110 / ATCC 27325 / DSM 5911</strain>
    </source>
</reference>
<reference key="4">
    <citation type="journal article" date="1997" name="Science">
        <title>The complete genome sequence of Escherichia coli K-12.</title>
        <authorList>
            <person name="Blattner F.R."/>
            <person name="Plunkett G. III"/>
            <person name="Bloch C.A."/>
            <person name="Perna N.T."/>
            <person name="Burland V."/>
            <person name="Riley M."/>
            <person name="Collado-Vides J."/>
            <person name="Glasner J.D."/>
            <person name="Rode C.K."/>
            <person name="Mayhew G.F."/>
            <person name="Gregor J."/>
            <person name="Davis N.W."/>
            <person name="Kirkpatrick H.A."/>
            <person name="Goeden M.A."/>
            <person name="Rose D.J."/>
            <person name="Mau B."/>
            <person name="Shao Y."/>
        </authorList>
    </citation>
    <scope>NUCLEOTIDE SEQUENCE [LARGE SCALE GENOMIC DNA]</scope>
    <source>
        <strain>K12 / MG1655 / ATCC 47076</strain>
    </source>
</reference>
<reference key="5">
    <citation type="journal article" date="2006" name="Mol. Syst. Biol.">
        <title>Highly accurate genome sequences of Escherichia coli K-12 strains MG1655 and W3110.</title>
        <authorList>
            <person name="Hayashi K."/>
            <person name="Morooka N."/>
            <person name="Yamamoto Y."/>
            <person name="Fujita K."/>
            <person name="Isono K."/>
            <person name="Choi S."/>
            <person name="Ohtsubo E."/>
            <person name="Baba T."/>
            <person name="Wanner B.L."/>
            <person name="Mori H."/>
            <person name="Horiuchi T."/>
        </authorList>
    </citation>
    <scope>NUCLEOTIDE SEQUENCE [LARGE SCALE GENOMIC DNA]</scope>
    <source>
        <strain>K12 / W3110 / ATCC 27325 / DSM 5911</strain>
    </source>
</reference>
<reference key="6">
    <citation type="journal article" date="2002" name="J. Bacteriol.">
        <title>Identification of the periplasmic cobalamin-binding protein BtuF of Escherichia coli.</title>
        <authorList>
            <person name="Cadieux N."/>
            <person name="Bradbeer C."/>
            <person name="Reeger-Schneider E."/>
            <person name="Koester W."/>
            <person name="Mohanty A.K."/>
            <person name="Wiener M.C."/>
            <person name="Kadner R.J."/>
        </authorList>
    </citation>
    <scope>CHARACTERIZATION</scope>
    <source>
        <strain>K12 / MC4100 / ATCC 35695 / DSM 6574</strain>
    </source>
</reference>
<reference key="7">
    <citation type="journal article" date="2005" name="Science">
        <title>Global topology analysis of the Escherichia coli inner membrane proteome.</title>
        <authorList>
            <person name="Daley D.O."/>
            <person name="Rapp M."/>
            <person name="Granseth E."/>
            <person name="Melen K."/>
            <person name="Drew D."/>
            <person name="von Heijne G."/>
        </authorList>
    </citation>
    <scope>TOPOLOGY [LARGE SCALE ANALYSIS]</scope>
    <source>
        <strain>K12 / MG1655 / ATCC 47076</strain>
    </source>
</reference>
<reference key="8">
    <citation type="journal article" date="2002" name="Science">
        <title>The E. coli BtuCD structure: a framework for ABC transporter architecture and mechanism.</title>
        <authorList>
            <person name="Locher K.P."/>
            <person name="Lee A.T."/>
            <person name="Rees D.C."/>
        </authorList>
    </citation>
    <scope>X-RAY CRYSTALLOGRAPHY (3.2 ANGSTROMS) IN COMPLEX WITH BTUD</scope>
</reference>
<organism>
    <name type="scientific">Escherichia coli (strain K12)</name>
    <dbReference type="NCBI Taxonomy" id="83333"/>
    <lineage>
        <taxon>Bacteria</taxon>
        <taxon>Pseudomonadati</taxon>
        <taxon>Pseudomonadota</taxon>
        <taxon>Gammaproteobacteria</taxon>
        <taxon>Enterobacterales</taxon>
        <taxon>Enterobacteriaceae</taxon>
        <taxon>Escherichia</taxon>
    </lineage>
</organism>
<dbReference type="EMBL" id="M14031">
    <property type="protein sequence ID" value="AAA23526.1"/>
    <property type="molecule type" value="Genomic_DNA"/>
</dbReference>
<dbReference type="EMBL" id="U00096">
    <property type="protein sequence ID" value="AAC74781.1"/>
    <property type="molecule type" value="Genomic_DNA"/>
</dbReference>
<dbReference type="EMBL" id="AP009048">
    <property type="protein sequence ID" value="BAA15479.1"/>
    <property type="molecule type" value="Genomic_DNA"/>
</dbReference>
<dbReference type="PIR" id="G64929">
    <property type="entry name" value="QRECBC"/>
</dbReference>
<dbReference type="RefSeq" id="NP_416226.1">
    <property type="nucleotide sequence ID" value="NC_000913.3"/>
</dbReference>
<dbReference type="RefSeq" id="WP_000956528.1">
    <property type="nucleotide sequence ID" value="NZ_SSZK01000001.1"/>
</dbReference>
<dbReference type="PDB" id="1L7V">
    <property type="method" value="X-ray"/>
    <property type="resolution" value="3.20 A"/>
    <property type="chains" value="A/B=1-326"/>
</dbReference>
<dbReference type="PDB" id="2QI9">
    <property type="method" value="X-ray"/>
    <property type="resolution" value="2.60 A"/>
    <property type="chains" value="A/B=1-326"/>
</dbReference>
<dbReference type="PDB" id="4DBL">
    <property type="method" value="X-ray"/>
    <property type="resolution" value="3.49 A"/>
    <property type="chains" value="A/B/F/G=1-326"/>
</dbReference>
<dbReference type="PDB" id="4FI3">
    <property type="method" value="X-ray"/>
    <property type="resolution" value="3.47 A"/>
    <property type="chains" value="A/B=1-326"/>
</dbReference>
<dbReference type="PDB" id="4R9U">
    <property type="method" value="X-ray"/>
    <property type="resolution" value="2.78 A"/>
    <property type="chains" value="A/B=1-326"/>
</dbReference>
<dbReference type="PDBsum" id="1L7V"/>
<dbReference type="PDBsum" id="2QI9"/>
<dbReference type="PDBsum" id="4DBL"/>
<dbReference type="PDBsum" id="4FI3"/>
<dbReference type="PDBsum" id="4R9U"/>
<dbReference type="SMR" id="P06609"/>
<dbReference type="BioGRID" id="4263152">
    <property type="interactions" value="131"/>
</dbReference>
<dbReference type="ComplexPortal" id="CPX-2105">
    <property type="entry name" value="Cobalamin ABC transporter complex"/>
</dbReference>
<dbReference type="ComplexPortal" id="CPX-2106">
    <property type="entry name" value="BtuCD complex"/>
</dbReference>
<dbReference type="DIP" id="DIP-9233N"/>
<dbReference type="FunCoup" id="P06609">
    <property type="interactions" value="517"/>
</dbReference>
<dbReference type="IntAct" id="P06609">
    <property type="interactions" value="2"/>
</dbReference>
<dbReference type="MINT" id="P06609"/>
<dbReference type="STRING" id="511145.b1711"/>
<dbReference type="TCDB" id="3.A.1.13.1">
    <property type="family name" value="the atp-binding cassette (abc) superfamily"/>
</dbReference>
<dbReference type="PaxDb" id="511145-b1711"/>
<dbReference type="EnsemblBacteria" id="AAC74781">
    <property type="protein sequence ID" value="AAC74781"/>
    <property type="gene ID" value="b1711"/>
</dbReference>
<dbReference type="GeneID" id="945877"/>
<dbReference type="KEGG" id="ecj:JW1701"/>
<dbReference type="KEGG" id="eco:b1711"/>
<dbReference type="KEGG" id="ecoc:C3026_09795"/>
<dbReference type="PATRIC" id="fig|1411691.4.peg.546"/>
<dbReference type="EchoBASE" id="EB0125"/>
<dbReference type="eggNOG" id="COG4139">
    <property type="taxonomic scope" value="Bacteria"/>
</dbReference>
<dbReference type="HOGENOM" id="CLU_013016_0_3_6"/>
<dbReference type="InParanoid" id="P06609"/>
<dbReference type="OMA" id="SVAMRGW"/>
<dbReference type="OrthoDB" id="9055647at2"/>
<dbReference type="PhylomeDB" id="P06609"/>
<dbReference type="BioCyc" id="EcoCyc:BTUC-MONOMER"/>
<dbReference type="BioCyc" id="MetaCyc:BTUC-MONOMER"/>
<dbReference type="BRENDA" id="7.6.2.8">
    <property type="organism ID" value="2026"/>
</dbReference>
<dbReference type="EvolutionaryTrace" id="P06609"/>
<dbReference type="PRO" id="PR:P06609"/>
<dbReference type="Proteomes" id="UP000000625">
    <property type="component" value="Chromosome"/>
</dbReference>
<dbReference type="GO" id="GO:0043190">
    <property type="term" value="C:ATP-binding cassette (ABC) transporter complex"/>
    <property type="evidence" value="ECO:0000314"/>
    <property type="project" value="EcoCyc"/>
</dbReference>
<dbReference type="GO" id="GO:1990193">
    <property type="term" value="C:BtuCD complex"/>
    <property type="evidence" value="ECO:0000353"/>
    <property type="project" value="ComplexPortal"/>
</dbReference>
<dbReference type="GO" id="GO:1990191">
    <property type="term" value="C:cobalamin transport complex"/>
    <property type="evidence" value="ECO:0000353"/>
    <property type="project" value="ComplexPortal"/>
</dbReference>
<dbReference type="GO" id="GO:0016020">
    <property type="term" value="C:membrane"/>
    <property type="evidence" value="ECO:0000314"/>
    <property type="project" value="ComplexPortal"/>
</dbReference>
<dbReference type="GO" id="GO:0005886">
    <property type="term" value="C:plasma membrane"/>
    <property type="evidence" value="ECO:0000314"/>
    <property type="project" value="EcoCyc"/>
</dbReference>
<dbReference type="GO" id="GO:0015420">
    <property type="term" value="F:ABC-type vitamin B12 transporter activity"/>
    <property type="evidence" value="ECO:0000315"/>
    <property type="project" value="EcoliWiki"/>
</dbReference>
<dbReference type="GO" id="GO:0042802">
    <property type="term" value="F:identical protein binding"/>
    <property type="evidence" value="ECO:0000353"/>
    <property type="project" value="IntAct"/>
</dbReference>
<dbReference type="GO" id="GO:0022857">
    <property type="term" value="F:transmembrane transporter activity"/>
    <property type="evidence" value="ECO:0000318"/>
    <property type="project" value="GO_Central"/>
</dbReference>
<dbReference type="GO" id="GO:0015889">
    <property type="term" value="P:cobalamin transport"/>
    <property type="evidence" value="ECO:0000314"/>
    <property type="project" value="EcoCyc"/>
</dbReference>
<dbReference type="CDD" id="cd06550">
    <property type="entry name" value="TM_ABC_iron-siderophores_like"/>
    <property type="match status" value="1"/>
</dbReference>
<dbReference type="FunFam" id="1.10.3470.10:FF:000001">
    <property type="entry name" value="Vitamin B12 ABC transporter permease BtuC"/>
    <property type="match status" value="1"/>
</dbReference>
<dbReference type="Gene3D" id="1.10.3470.10">
    <property type="entry name" value="ABC transporter involved in vitamin B12 uptake, BtuC"/>
    <property type="match status" value="1"/>
</dbReference>
<dbReference type="HAMAP" id="MF_01004">
    <property type="entry name" value="BtuC"/>
    <property type="match status" value="1"/>
</dbReference>
<dbReference type="InterPro" id="IPR037294">
    <property type="entry name" value="ABC_BtuC-like"/>
</dbReference>
<dbReference type="InterPro" id="IPR023691">
    <property type="entry name" value="ABC_transptr_BtuC"/>
</dbReference>
<dbReference type="InterPro" id="IPR000522">
    <property type="entry name" value="ABC_transptr_permease_BtuC"/>
</dbReference>
<dbReference type="NCBIfam" id="NF003001">
    <property type="entry name" value="PRK03784.1"/>
    <property type="match status" value="1"/>
</dbReference>
<dbReference type="PANTHER" id="PTHR30472">
    <property type="entry name" value="FERRIC ENTEROBACTIN TRANSPORT SYSTEM PERMEASE PROTEIN"/>
    <property type="match status" value="1"/>
</dbReference>
<dbReference type="PANTHER" id="PTHR30472:SF29">
    <property type="entry name" value="VITAMIN B12 IMPORT SYSTEM PERMEASE PROTEIN BTUC"/>
    <property type="match status" value="1"/>
</dbReference>
<dbReference type="Pfam" id="PF01032">
    <property type="entry name" value="FecCD"/>
    <property type="match status" value="1"/>
</dbReference>
<dbReference type="SUPFAM" id="SSF81345">
    <property type="entry name" value="ABC transporter involved in vitamin B12 uptake, BtuC"/>
    <property type="match status" value="1"/>
</dbReference>
<proteinExistence type="evidence at protein level"/>
<accession>P06609</accession>
<accession>P77197</accession>
<evidence type="ECO:0000269" key="1">
    <source>
    </source>
</evidence>
<evidence type="ECO:0000269" key="2">
    <source>
    </source>
</evidence>
<evidence type="ECO:0000305" key="3"/>
<evidence type="ECO:0007829" key="4">
    <source>
        <dbReference type="PDB" id="1L7V"/>
    </source>
</evidence>
<evidence type="ECO:0007829" key="5">
    <source>
        <dbReference type="PDB" id="2QI9"/>
    </source>
</evidence>
<evidence type="ECO:0007829" key="6">
    <source>
        <dbReference type="PDB" id="4R9U"/>
    </source>
</evidence>
<comment type="function">
    <text>Part of the ABC transporter complex BtuCDF involved in vitamin B12 import. Involved in the translocation of the substrate across the membrane.</text>
</comment>
<comment type="subunit">
    <text evidence="1">The complex is composed of two ATP-binding proteins (BtuD), two transmembrane proteins (BtuC) and a solute-binding protein (BtuF).</text>
</comment>
<comment type="interaction">
    <interactant intactId="EBI-1033427">
        <id>P06609</id>
    </interactant>
    <interactant intactId="EBI-1033427">
        <id>P06609</id>
        <label>btuC</label>
    </interactant>
    <organismsDiffer>false</organismsDiffer>
    <experiments>2</experiments>
</comment>
<comment type="interaction">
    <interactant intactId="EBI-1033427">
        <id>P06609</id>
    </interactant>
    <interactant intactId="EBI-1033420">
        <id>P06611</id>
        <label>btuD</label>
    </interactant>
    <organismsDiffer>false</organismsDiffer>
    <experiments>13</experiments>
</comment>
<comment type="interaction">
    <interactant intactId="EBI-1033427">
        <id>P06609</id>
    </interactant>
    <interactant intactId="EBI-1118724">
        <id>P37028</id>
        <label>btuF</label>
    </interactant>
    <organismsDiffer>false</organismsDiffer>
    <experiments>10</experiments>
</comment>
<comment type="subcellular location">
    <subcellularLocation>
        <location>Cell inner membrane</location>
        <topology>Multi-pass membrane protein</topology>
    </subcellularLocation>
</comment>
<comment type="similarity">
    <text evidence="3">Belongs to the binding-protein-dependent transport system permease family. FecCD subfamily.</text>
</comment>
<feature type="chain" id="PRO_0000059968" description="Vitamin B12 import system permease protein BtuC">
    <location>
        <begin position="1"/>
        <end position="326"/>
    </location>
</feature>
<feature type="topological domain" description="Cytoplasmic" evidence="2">
    <location>
        <begin position="1"/>
        <end position="10"/>
    </location>
</feature>
<feature type="transmembrane region" description="Helical; Name=1">
    <location>
        <begin position="11"/>
        <end position="35"/>
    </location>
</feature>
<feature type="topological domain" description="Periplasmic" evidence="2">
    <location>
        <begin position="36"/>
        <end position="56"/>
    </location>
</feature>
<feature type="transmembrane region" description="Helical; Name=2">
    <location>
        <begin position="57"/>
        <end position="81"/>
    </location>
</feature>
<feature type="topological domain" description="Cytoplasmic" evidence="2">
    <location>
        <begin position="82"/>
        <end position="92"/>
    </location>
</feature>
<feature type="transmembrane region" description="Helical; Name=3">
    <location>
        <begin position="93"/>
        <end position="107"/>
    </location>
</feature>
<feature type="topological domain" description="Periplasmic" evidence="2">
    <location>
        <begin position="108"/>
        <end position="113"/>
    </location>
</feature>
<feature type="transmembrane region" description="Helical; Name=4">
    <location>
        <begin position="114"/>
        <end position="138"/>
    </location>
</feature>
<feature type="topological domain" description="Cytoplasmic" evidence="2">
    <location>
        <begin position="139"/>
        <end position="141"/>
    </location>
</feature>
<feature type="transmembrane region" description="Helical; Name=5">
    <location>
        <begin position="142"/>
        <end position="166"/>
    </location>
</feature>
<feature type="topological domain" description="Periplasmic" evidence="2">
    <location>
        <begin position="167"/>
        <end position="190"/>
    </location>
</feature>
<feature type="transmembrane region" description="Helical; Name=6">
    <location>
        <begin position="191"/>
        <end position="206"/>
    </location>
</feature>
<feature type="topological domain" description="Cytoplasmic" evidence="2">
    <location>
        <begin position="207"/>
        <end position="228"/>
    </location>
</feature>
<feature type="transmembrane region" description="Helical; Name=7">
    <location>
        <begin position="229"/>
        <end position="249"/>
    </location>
</feature>
<feature type="topological domain" description="Periplasmic" evidence="2">
    <location>
        <begin position="250"/>
        <end position="257"/>
    </location>
</feature>
<feature type="transmembrane region" description="Helical; Name=8">
    <location>
        <begin position="258"/>
        <end position="267"/>
    </location>
</feature>
<feature type="topological domain" description="Cytoplasmic" evidence="2">
    <location>
        <begin position="268"/>
        <end position="274"/>
    </location>
</feature>
<feature type="transmembrane region" description="Helical; Name=9">
    <location>
        <begin position="275"/>
        <end position="296"/>
    </location>
</feature>
<feature type="topological domain" description="Periplasmic" evidence="2">
    <location>
        <begin position="297"/>
        <end position="304"/>
    </location>
</feature>
<feature type="transmembrane region" description="Helical; Name=10">
    <location>
        <begin position="305"/>
        <end position="324"/>
    </location>
</feature>
<feature type="topological domain" description="Cytoplasmic" evidence="2">
    <location>
        <begin position="325"/>
        <end position="326"/>
    </location>
</feature>
<feature type="sequence conflict" description="In Ref. 1; AAA23526." evidence="3" ref="1">
    <original>QL</original>
    <variation>LT</variation>
    <location>
        <begin position="111"/>
        <end position="112"/>
    </location>
</feature>
<feature type="sequence conflict" description="In Ref. 1; AAA23526." evidence="3" ref="1">
    <original>A</original>
    <variation>R</variation>
    <location>
        <position position="123"/>
    </location>
</feature>
<feature type="helix" evidence="5">
    <location>
        <begin position="3"/>
        <end position="31"/>
    </location>
</feature>
<feature type="strand" evidence="6">
    <location>
        <begin position="34"/>
        <end position="36"/>
    </location>
</feature>
<feature type="helix" evidence="5">
    <location>
        <begin position="40"/>
        <end position="42"/>
    </location>
</feature>
<feature type="strand" evidence="6">
    <location>
        <begin position="43"/>
        <end position="45"/>
    </location>
</feature>
<feature type="helix" evidence="5">
    <location>
        <begin position="48"/>
        <end position="54"/>
    </location>
</feature>
<feature type="helix" evidence="5">
    <location>
        <begin position="56"/>
        <end position="80"/>
    </location>
</feature>
<feature type="helix" evidence="5">
    <location>
        <begin position="88"/>
        <end position="91"/>
    </location>
</feature>
<feature type="helix" evidence="5">
    <location>
        <begin position="93"/>
        <end position="108"/>
    </location>
</feature>
<feature type="helix" evidence="5">
    <location>
        <begin position="114"/>
        <end position="136"/>
    </location>
</feature>
<feature type="turn" evidence="6">
    <location>
        <begin position="137"/>
        <end position="139"/>
    </location>
</feature>
<feature type="helix" evidence="5">
    <location>
        <begin position="142"/>
        <end position="165"/>
    </location>
</feature>
<feature type="helix" evidence="5">
    <location>
        <begin position="171"/>
        <end position="179"/>
    </location>
</feature>
<feature type="helix" evidence="5">
    <location>
        <begin position="188"/>
        <end position="190"/>
    </location>
</feature>
<feature type="helix" evidence="5">
    <location>
        <begin position="191"/>
        <end position="194"/>
    </location>
</feature>
<feature type="turn" evidence="5">
    <location>
        <begin position="195"/>
        <end position="197"/>
    </location>
</feature>
<feature type="helix" evidence="5">
    <location>
        <begin position="198"/>
        <end position="204"/>
    </location>
</feature>
<feature type="helix" evidence="5">
    <location>
        <begin position="208"/>
        <end position="215"/>
    </location>
</feature>
<feature type="helix" evidence="5">
    <location>
        <begin position="218"/>
        <end position="223"/>
    </location>
</feature>
<feature type="helix" evidence="5">
    <location>
        <begin position="228"/>
        <end position="250"/>
    </location>
</feature>
<feature type="strand" evidence="4">
    <location>
        <begin position="255"/>
        <end position="258"/>
    </location>
</feature>
<feature type="helix" evidence="5">
    <location>
        <begin position="259"/>
        <end position="265"/>
    </location>
</feature>
<feature type="turn" evidence="5">
    <location>
        <begin position="266"/>
        <end position="268"/>
    </location>
</feature>
<feature type="helix" evidence="5">
    <location>
        <begin position="272"/>
        <end position="295"/>
    </location>
</feature>
<feature type="strand" evidence="5">
    <location>
        <begin position="296"/>
        <end position="298"/>
    </location>
</feature>
<feature type="strand" evidence="6">
    <location>
        <begin position="299"/>
        <end position="301"/>
    </location>
</feature>
<feature type="helix" evidence="5">
    <location>
        <begin position="305"/>
        <end position="321"/>
    </location>
</feature>
<name>BTUC_ECOLI</name>
<keyword id="KW-0002">3D-structure</keyword>
<keyword id="KW-0997">Cell inner membrane</keyword>
<keyword id="KW-1003">Cell membrane</keyword>
<keyword id="KW-0472">Membrane</keyword>
<keyword id="KW-1185">Reference proteome</keyword>
<keyword id="KW-0812">Transmembrane</keyword>
<keyword id="KW-1133">Transmembrane helix</keyword>
<keyword id="KW-0813">Transport</keyword>
<sequence length="326" mass="34949">MLTLARQQQRQNIRWLLCLSVLMLLALLLSLCAGEQWISPGDWFTPRGELFVWQIRLPRTLAVLLVGAALAISGAVMQALFENPLAEPGLLGVSNGAGVGLIAAVLLGQGQLPNWALGLCAIAGALIITLILLRFARRHLSTSRLLLAGVALGIICSALMTWAIYFSTSVDLRQLMYWMMGGFGGVDWRQSWLMLALIPVLLWICCQSRPMNMLALGEISARQLGLPLWFWRNVLVAATGWMVGVSVALAGAIGFIGLVIPHILRLCGLTDHRVLLPGCALAGASALLLADIVARLALAAAELPIGVVTATLGAPVFIWLLLKAGR</sequence>
<protein>
    <recommendedName>
        <fullName>Vitamin B12 import system permease protein BtuC</fullName>
    </recommendedName>
</protein>